<sequence>MAKRLVLFAAVVIALVALTTAEGEASRQLQCERELQESSLEACRQVVDQQLAGRLPWSTGLQMRCCQQLRDVSAKCRSVAVSQVARQYEQTVVPPKGGSFYPGETTPLQQLQQGIFWGTSSQTVQGYYPGVTSPRQGSYYPGQASPQQPGQGQQPGKWQEPGQGQQWYYPTSLQQPGQGQQIGKGQQGYYPTSLQQPGQGQQGYYPTSLQHTGQRQQPVQGQQPEQGQQPGQWQQGYYPTSPQQLGQGQQPRQWQQSGQGQQGHYPTSLQQPGQGQQGHYLASQQQPGQGQQGHYPASQQQPGQGQQGHYPASQQQPGQGQQGHYPASQQEPGQGQQGQIPASQQQPGQGQQGHYPASLQQPGQGQQGHYPTSLQQLGQGQQTGQPGQKQQPGQGQQTGQGQQPEQEQQPGQGQQGYYPTSLQQPGQGQQQGQGQQGYYPTSLQQPGQGQQGHYPASLQQPGQGQPGQRQQPGQGQHPEQGKQPGQGQQGYYPTSPQQPGQGQQLGQGQQGYYPTSPQQPGQGQQPGQGQQGHCPTSPQQSGQAQQPGQGQQIGQVQQPGQGQQGYYPTSVQQPGQGQQSGQGQQSGQGHQPGQGQQSGQEQQGYDSPYHVSAEQQAASPMVAKAQQPATQLPTVCRMEGGDALSASQ</sequence>
<evidence type="ECO:0000256" key="1">
    <source>
        <dbReference type="SAM" id="MobiDB-lite"/>
    </source>
</evidence>
<evidence type="ECO:0000305" key="2"/>
<organism>
    <name type="scientific">Triticum aestivum</name>
    <name type="common">Wheat</name>
    <dbReference type="NCBI Taxonomy" id="4565"/>
    <lineage>
        <taxon>Eukaryota</taxon>
        <taxon>Viridiplantae</taxon>
        <taxon>Streptophyta</taxon>
        <taxon>Embryophyta</taxon>
        <taxon>Tracheophyta</taxon>
        <taxon>Spermatophyta</taxon>
        <taxon>Magnoliopsida</taxon>
        <taxon>Liliopsida</taxon>
        <taxon>Poales</taxon>
        <taxon>Poaceae</taxon>
        <taxon>BOP clade</taxon>
        <taxon>Pooideae</taxon>
        <taxon>Triticodae</taxon>
        <taxon>Triticeae</taxon>
        <taxon>Triticinae</taxon>
        <taxon>Triticum</taxon>
    </lineage>
</organism>
<proteinExistence type="inferred from homology"/>
<gene>
    <name type="primary">GLU-D1-2B</name>
</gene>
<accession>P10387</accession>
<name>GLT0_WHEAT</name>
<reference key="1">
    <citation type="journal article" date="1989" name="Nucleic Acids Res.">
        <title>Nucleotide sequences of the two high-molecular-weight glutenin genes from the D-genome of a hexaploid bread wheat, Triticum aestivum L. cv Cheyenne.</title>
        <authorList>
            <person name="Anderson O.D."/>
            <person name="Greene F.C."/>
            <person name="Yip R.E."/>
            <person name="Halford N.G."/>
            <person name="Shewry P.R."/>
            <person name="Malpica-Romero J.M."/>
        </authorList>
    </citation>
    <scope>NUCLEOTIDE SEQUENCE [GENOMIC DNA]</scope>
    <source>
        <strain>cv. Cheyenne</strain>
    </source>
</reference>
<reference key="2">
    <citation type="journal article" date="1989" name="Biochem. J.">
        <title>Conformational differences between two wheat (Triticum aestivum) 'high-molecular-weight' glutenin subunits are due to a short region containing six amino acid differences.</title>
        <authorList>
            <person name="Goldsbrough A.P."/>
            <person name="Bulleid N.J."/>
            <person name="Freedman R.B."/>
            <person name="Flavell R.B."/>
        </authorList>
    </citation>
    <scope>NUCLEOTIDE SEQUENCE [GENOMIC DNA] OF 126-648</scope>
</reference>
<dbReference type="EMBL" id="X12929">
    <property type="protein sequence ID" value="CAA31396.1"/>
    <property type="molecule type" value="Genomic_DNA"/>
</dbReference>
<dbReference type="PIR" id="S04832">
    <property type="entry name" value="S04832"/>
</dbReference>
<dbReference type="SMR" id="P10387"/>
<dbReference type="STRING" id="4565.P10387"/>
<dbReference type="Allergome" id="2898">
    <property type="allergen name" value="Tri a 26"/>
</dbReference>
<dbReference type="EnsemblPlants" id="TraesPARA_EIv1.0_0301220.1">
    <property type="protein sequence ID" value="TraesPARA_EIv1.0_0301220.1.CDS1"/>
    <property type="gene ID" value="TraesPARA_EIv1.0_0301220"/>
</dbReference>
<dbReference type="Gramene" id="TraesPARA_EIv1.0_0301220.1">
    <property type="protein sequence ID" value="TraesPARA_EIv1.0_0301220.1.CDS1"/>
    <property type="gene ID" value="TraesPARA_EIv1.0_0301220"/>
</dbReference>
<dbReference type="Proteomes" id="UP000019116">
    <property type="component" value="Unplaced"/>
</dbReference>
<dbReference type="GO" id="GO:0045735">
    <property type="term" value="F:nutrient reservoir activity"/>
    <property type="evidence" value="ECO:0007669"/>
    <property type="project" value="UniProtKB-KW"/>
</dbReference>
<dbReference type="CDD" id="cd00261">
    <property type="entry name" value="AAI_SS"/>
    <property type="match status" value="1"/>
</dbReference>
<dbReference type="Gene3D" id="1.10.110.10">
    <property type="entry name" value="Plant lipid-transfer and hydrophobic proteins"/>
    <property type="match status" value="1"/>
</dbReference>
<dbReference type="InterPro" id="IPR036312">
    <property type="entry name" value="Bifun_inhib/LTP/seed_sf"/>
</dbReference>
<dbReference type="InterPro" id="IPR001419">
    <property type="entry name" value="Glutenin"/>
</dbReference>
<dbReference type="PANTHER" id="PTHR34481:SF14">
    <property type="entry name" value="GLUTENIN, HIGH MOLECULAR WEIGHT SUBUNIT DX5"/>
    <property type="match status" value="1"/>
</dbReference>
<dbReference type="PANTHER" id="PTHR34481">
    <property type="entry name" value="TRYPSIN/FACTOR XIIA INHIBITOR-RELATED"/>
    <property type="match status" value="1"/>
</dbReference>
<dbReference type="Pfam" id="PF03157">
    <property type="entry name" value="Glutenin_hmw"/>
    <property type="match status" value="3"/>
</dbReference>
<dbReference type="PRINTS" id="PR00210">
    <property type="entry name" value="GLUTENIN"/>
</dbReference>
<dbReference type="SUPFAM" id="SSF47699">
    <property type="entry name" value="Bifunctional inhibitor/lipid-transfer protein/seed storage 2S albumin"/>
    <property type="match status" value="1"/>
</dbReference>
<comment type="function">
    <text>Glutenins are high-molecular weight seed storage proteins of wheat endosperm. Thought to be responsible for the visco-elastic property of wheat dough.</text>
</comment>
<comment type="subunit">
    <text>Disulfide-bridge linked aggregates.</text>
</comment>
<comment type="miscellaneous">
    <text>Glutenins are coded by several genes on each of the group 1 chromosomes of wheat.</text>
</comment>
<comment type="miscellaneous">
    <text>The mature protein is characterized by a large number of well preserved repeats of the two motifs: GQQPGQ and GQQPGQGQQGYYPTS.</text>
</comment>
<comment type="similarity">
    <text evidence="2">Belongs to the gliadin/glutenin family.</text>
</comment>
<protein>
    <recommendedName>
        <fullName>Glutenin, high molecular weight subunit DY10</fullName>
    </recommendedName>
</protein>
<feature type="signal peptide">
    <location>
        <begin position="1"/>
        <end position="21"/>
    </location>
</feature>
<feature type="chain" id="PRO_0000032207" description="Glutenin, high molecular weight subunit DY10">
    <location>
        <begin position="22"/>
        <end position="648"/>
    </location>
</feature>
<feature type="region of interest" description="Disordered" evidence="1">
    <location>
        <begin position="127"/>
        <end position="648"/>
    </location>
</feature>
<feature type="compositionally biased region" description="Low complexity" evidence="1">
    <location>
        <begin position="141"/>
        <end position="166"/>
    </location>
</feature>
<feature type="compositionally biased region" description="Low complexity" evidence="1">
    <location>
        <begin position="195"/>
        <end position="236"/>
    </location>
</feature>
<feature type="compositionally biased region" description="Low complexity" evidence="1">
    <location>
        <begin position="243"/>
        <end position="263"/>
    </location>
</feature>
<feature type="compositionally biased region" description="Polar residues" evidence="1">
    <location>
        <begin position="264"/>
        <end position="274"/>
    </location>
</feature>
<feature type="compositionally biased region" description="Low complexity" evidence="1">
    <location>
        <begin position="284"/>
        <end position="353"/>
    </location>
</feature>
<feature type="compositionally biased region" description="Low complexity" evidence="1">
    <location>
        <begin position="360"/>
        <end position="416"/>
    </location>
</feature>
<feature type="compositionally biased region" description="Low complexity" evidence="1">
    <location>
        <begin position="459"/>
        <end position="502"/>
    </location>
</feature>
<feature type="compositionally biased region" description="Low complexity" evidence="1">
    <location>
        <begin position="510"/>
        <end position="523"/>
    </location>
</feature>
<feature type="compositionally biased region" description="Low complexity" evidence="1">
    <location>
        <begin position="531"/>
        <end position="565"/>
    </location>
</feature>
<feature type="compositionally biased region" description="Gly residues" evidence="1">
    <location>
        <begin position="578"/>
        <end position="592"/>
    </location>
</feature>
<feature type="compositionally biased region" description="Low complexity" evidence="1">
    <location>
        <begin position="593"/>
        <end position="604"/>
    </location>
</feature>
<feature type="sequence conflict" description="In Ref. 2." evidence="2" ref="2">
    <original>GQ</original>
    <variation>QG</variation>
    <location>
        <begin position="475"/>
        <end position="476"/>
    </location>
</feature>
<keyword id="KW-1015">Disulfide bond</keyword>
<keyword id="KW-1185">Reference proteome</keyword>
<keyword id="KW-0677">Repeat</keyword>
<keyword id="KW-0708">Seed storage protein</keyword>
<keyword id="KW-0732">Signal</keyword>
<keyword id="KW-0758">Storage protein</keyword>